<dbReference type="EC" id="3.5.1.18" evidence="1"/>
<dbReference type="EMBL" id="CP000792">
    <property type="protein sequence ID" value="EAT98354.1"/>
    <property type="molecule type" value="Genomic_DNA"/>
</dbReference>
<dbReference type="RefSeq" id="WP_012140346.1">
    <property type="nucleotide sequence ID" value="NC_009802.2"/>
</dbReference>
<dbReference type="SMR" id="A7ZFC1"/>
<dbReference type="STRING" id="360104.CCC13826_0246"/>
<dbReference type="KEGG" id="cco:CCC13826_0246"/>
<dbReference type="eggNOG" id="COG0624">
    <property type="taxonomic scope" value="Bacteria"/>
</dbReference>
<dbReference type="HOGENOM" id="CLU_021802_4_0_7"/>
<dbReference type="OrthoDB" id="5486471at2"/>
<dbReference type="UniPathway" id="UPA00034">
    <property type="reaction ID" value="UER00021"/>
</dbReference>
<dbReference type="Proteomes" id="UP000001121">
    <property type="component" value="Chromosome"/>
</dbReference>
<dbReference type="GO" id="GO:0008777">
    <property type="term" value="F:acetylornithine deacetylase activity"/>
    <property type="evidence" value="ECO:0007669"/>
    <property type="project" value="TreeGrafter"/>
</dbReference>
<dbReference type="GO" id="GO:0046872">
    <property type="term" value="F:metal ion binding"/>
    <property type="evidence" value="ECO:0007669"/>
    <property type="project" value="UniProtKB-KW"/>
</dbReference>
<dbReference type="GO" id="GO:0009014">
    <property type="term" value="F:succinyl-diaminopimelate desuccinylase activity"/>
    <property type="evidence" value="ECO:0007669"/>
    <property type="project" value="UniProtKB-EC"/>
</dbReference>
<dbReference type="GO" id="GO:0019877">
    <property type="term" value="P:diaminopimelate biosynthetic process"/>
    <property type="evidence" value="ECO:0007669"/>
    <property type="project" value="UniProtKB-KW"/>
</dbReference>
<dbReference type="GO" id="GO:0006526">
    <property type="term" value="P:L-arginine biosynthetic process"/>
    <property type="evidence" value="ECO:0007669"/>
    <property type="project" value="TreeGrafter"/>
</dbReference>
<dbReference type="GO" id="GO:0009089">
    <property type="term" value="P:lysine biosynthetic process via diaminopimelate"/>
    <property type="evidence" value="ECO:0007669"/>
    <property type="project" value="UniProtKB-UniPathway"/>
</dbReference>
<dbReference type="CDD" id="cd03891">
    <property type="entry name" value="M20_DapE_proteobac"/>
    <property type="match status" value="1"/>
</dbReference>
<dbReference type="Gene3D" id="1.10.150.900">
    <property type="match status" value="1"/>
</dbReference>
<dbReference type="Gene3D" id="3.30.70.360">
    <property type="match status" value="1"/>
</dbReference>
<dbReference type="Gene3D" id="3.40.630.10">
    <property type="entry name" value="Zn peptidases"/>
    <property type="match status" value="1"/>
</dbReference>
<dbReference type="HAMAP" id="MF_01690">
    <property type="entry name" value="DapE"/>
    <property type="match status" value="1"/>
</dbReference>
<dbReference type="InterPro" id="IPR001261">
    <property type="entry name" value="ArgE/DapE_CS"/>
</dbReference>
<dbReference type="InterPro" id="IPR036264">
    <property type="entry name" value="Bact_exopeptidase_dim_dom"/>
</dbReference>
<dbReference type="InterPro" id="IPR005941">
    <property type="entry name" value="DapE_proteobac"/>
</dbReference>
<dbReference type="InterPro" id="IPR002933">
    <property type="entry name" value="Peptidase_M20"/>
</dbReference>
<dbReference type="InterPro" id="IPR011650">
    <property type="entry name" value="Peptidase_M20_dimer"/>
</dbReference>
<dbReference type="InterPro" id="IPR050072">
    <property type="entry name" value="Peptidase_M20A"/>
</dbReference>
<dbReference type="NCBIfam" id="TIGR01246">
    <property type="entry name" value="dapE_proteo"/>
    <property type="match status" value="1"/>
</dbReference>
<dbReference type="NCBIfam" id="NF009557">
    <property type="entry name" value="PRK13009.1"/>
    <property type="match status" value="1"/>
</dbReference>
<dbReference type="PANTHER" id="PTHR43808">
    <property type="entry name" value="ACETYLORNITHINE DEACETYLASE"/>
    <property type="match status" value="1"/>
</dbReference>
<dbReference type="PANTHER" id="PTHR43808:SF31">
    <property type="entry name" value="N-ACETYL-L-CITRULLINE DEACETYLASE"/>
    <property type="match status" value="1"/>
</dbReference>
<dbReference type="Pfam" id="PF07687">
    <property type="entry name" value="M20_dimer"/>
    <property type="match status" value="1"/>
</dbReference>
<dbReference type="Pfam" id="PF01546">
    <property type="entry name" value="Peptidase_M20"/>
    <property type="match status" value="1"/>
</dbReference>
<dbReference type="SUPFAM" id="SSF55031">
    <property type="entry name" value="Bacterial exopeptidase dimerisation domain"/>
    <property type="match status" value="1"/>
</dbReference>
<dbReference type="SUPFAM" id="SSF53187">
    <property type="entry name" value="Zn-dependent exopeptidases"/>
    <property type="match status" value="1"/>
</dbReference>
<dbReference type="PROSITE" id="PS00758">
    <property type="entry name" value="ARGE_DAPE_CPG2_1"/>
    <property type="match status" value="1"/>
</dbReference>
<dbReference type="PROSITE" id="PS00759">
    <property type="entry name" value="ARGE_DAPE_CPG2_2"/>
    <property type="match status" value="1"/>
</dbReference>
<gene>
    <name evidence="1" type="primary">dapE</name>
    <name type="ordered locus">Ccon26_16360</name>
    <name type="ORF">CCC13826_0246</name>
</gene>
<comment type="function">
    <text evidence="1">Catalyzes the hydrolysis of N-succinyl-L,L-diaminopimelic acid (SDAP), forming succinate and LL-2,6-diaminopimelate (DAP), an intermediate involved in the bacterial biosynthesis of lysine and meso-diaminopimelic acid, an essential component of bacterial cell walls.</text>
</comment>
<comment type="catalytic activity">
    <reaction evidence="1">
        <text>N-succinyl-(2S,6S)-2,6-diaminopimelate + H2O = (2S,6S)-2,6-diaminopimelate + succinate</text>
        <dbReference type="Rhea" id="RHEA:22608"/>
        <dbReference type="ChEBI" id="CHEBI:15377"/>
        <dbReference type="ChEBI" id="CHEBI:30031"/>
        <dbReference type="ChEBI" id="CHEBI:57609"/>
        <dbReference type="ChEBI" id="CHEBI:58087"/>
        <dbReference type="EC" id="3.5.1.18"/>
    </reaction>
</comment>
<comment type="cofactor">
    <cofactor evidence="1">
        <name>Zn(2+)</name>
        <dbReference type="ChEBI" id="CHEBI:29105"/>
    </cofactor>
    <cofactor evidence="1">
        <name>Co(2+)</name>
        <dbReference type="ChEBI" id="CHEBI:48828"/>
    </cofactor>
    <text evidence="1">Binds 2 Zn(2+) or Co(2+) ions per subunit.</text>
</comment>
<comment type="pathway">
    <text evidence="1">Amino-acid biosynthesis; L-lysine biosynthesis via DAP pathway; LL-2,6-diaminopimelate from (S)-tetrahydrodipicolinate (succinylase route): step 3/3.</text>
</comment>
<comment type="subunit">
    <text evidence="1">Homodimer.</text>
</comment>
<comment type="similarity">
    <text evidence="1">Belongs to the peptidase M20A family. DapE subfamily.</text>
</comment>
<reference key="1">
    <citation type="submission" date="2007-10" db="EMBL/GenBank/DDBJ databases">
        <title>Genome sequence of Campylobacter concisus 13826 isolated from human feces.</title>
        <authorList>
            <person name="Fouts D.E."/>
            <person name="Mongodin E.F."/>
            <person name="Puiu D."/>
            <person name="Sebastian Y."/>
            <person name="Miller W.G."/>
            <person name="Mandrell R.E."/>
            <person name="On S."/>
            <person name="Nelson K.E."/>
        </authorList>
    </citation>
    <scope>NUCLEOTIDE SEQUENCE [LARGE SCALE GENOMIC DNA]</scope>
    <source>
        <strain>13826</strain>
    </source>
</reference>
<feature type="chain" id="PRO_0000375516" description="Succinyl-diaminopimelate desuccinylase">
    <location>
        <begin position="1"/>
        <end position="363"/>
    </location>
</feature>
<feature type="active site" evidence="1">
    <location>
        <position position="65"/>
    </location>
</feature>
<feature type="active site" description="Proton acceptor" evidence="1">
    <location>
        <position position="123"/>
    </location>
</feature>
<feature type="binding site" evidence="1">
    <location>
        <position position="63"/>
    </location>
    <ligand>
        <name>Zn(2+)</name>
        <dbReference type="ChEBI" id="CHEBI:29105"/>
        <label>1</label>
    </ligand>
</feature>
<feature type="binding site" evidence="1">
    <location>
        <position position="94"/>
    </location>
    <ligand>
        <name>Zn(2+)</name>
        <dbReference type="ChEBI" id="CHEBI:29105"/>
        <label>1</label>
    </ligand>
</feature>
<feature type="binding site" evidence="1">
    <location>
        <position position="94"/>
    </location>
    <ligand>
        <name>Zn(2+)</name>
        <dbReference type="ChEBI" id="CHEBI:29105"/>
        <label>2</label>
    </ligand>
</feature>
<feature type="binding site" evidence="1">
    <location>
        <position position="124"/>
    </location>
    <ligand>
        <name>Zn(2+)</name>
        <dbReference type="ChEBI" id="CHEBI:29105"/>
        <label>2</label>
    </ligand>
</feature>
<feature type="binding site" evidence="1">
    <location>
        <position position="152"/>
    </location>
    <ligand>
        <name>Zn(2+)</name>
        <dbReference type="ChEBI" id="CHEBI:29105"/>
        <label>1</label>
    </ligand>
</feature>
<feature type="binding site" evidence="1">
    <location>
        <position position="337"/>
    </location>
    <ligand>
        <name>Zn(2+)</name>
        <dbReference type="ChEBI" id="CHEBI:29105"/>
        <label>2</label>
    </ligand>
</feature>
<sequence length="363" mass="39971">MVVSFLKELLNFRSITPDDAGSLEFIAKFLPDFEAKFIEKNGTKNLILSKIYGDGEHLAFAGHVDVVPPGDGWDSEPFTPLEKDGYIYARGSQDMKSGVAAFVCAAKEAKFEGKLSLILTSDEEGDGTYGTPLALEYLREIRDLPKFCVVAEPTCDKKFGDSIKVGRRGSINGKIVIKGVQGHVAYPEKCINPVNLIAPLLSKIADHDMDGGSEFFSPSKIVVTDIRGGMQVCNVTPSELSIMFNVRNSNLTDVNDVESYLRSVLDGLSYELSIKQSSKRFLTNKDSKIVRNLMASVTKITGVTPLLNTKGGTSDARHFAEFGVDAIEFGVINDRIHAKNERVSISEVNKLYEVFKDLIENFY</sequence>
<keyword id="KW-0028">Amino-acid biosynthesis</keyword>
<keyword id="KW-0170">Cobalt</keyword>
<keyword id="KW-0220">Diaminopimelate biosynthesis</keyword>
<keyword id="KW-0378">Hydrolase</keyword>
<keyword id="KW-0457">Lysine biosynthesis</keyword>
<keyword id="KW-0479">Metal-binding</keyword>
<keyword id="KW-0862">Zinc</keyword>
<name>DAPE_CAMC1</name>
<protein>
    <recommendedName>
        <fullName evidence="1">Succinyl-diaminopimelate desuccinylase</fullName>
        <shortName evidence="1">SDAP desuccinylase</shortName>
        <ecNumber evidence="1">3.5.1.18</ecNumber>
    </recommendedName>
    <alternativeName>
        <fullName evidence="1">N-succinyl-LL-2,6-diaminoheptanedioate amidohydrolase</fullName>
    </alternativeName>
</protein>
<evidence type="ECO:0000255" key="1">
    <source>
        <dbReference type="HAMAP-Rule" id="MF_01690"/>
    </source>
</evidence>
<accession>A7ZFC1</accession>
<organism>
    <name type="scientific">Campylobacter concisus (strain 13826)</name>
    <dbReference type="NCBI Taxonomy" id="360104"/>
    <lineage>
        <taxon>Bacteria</taxon>
        <taxon>Pseudomonadati</taxon>
        <taxon>Campylobacterota</taxon>
        <taxon>Epsilonproteobacteria</taxon>
        <taxon>Campylobacterales</taxon>
        <taxon>Campylobacteraceae</taxon>
        <taxon>Campylobacter</taxon>
    </lineage>
</organism>
<proteinExistence type="inferred from homology"/>